<proteinExistence type="evidence at transcript level"/>
<feature type="chain" id="PRO_0000247169" description="Centromere protein L">
    <location>
        <begin position="1"/>
        <end position="346"/>
    </location>
</feature>
<feature type="modified residue" description="Phosphoserine" evidence="2">
    <location>
        <position position="41"/>
    </location>
</feature>
<feature type="modified residue" description="Phosphothreonine" evidence="2">
    <location>
        <position position="45"/>
    </location>
</feature>
<feature type="modified residue" description="Phosphoserine" evidence="2">
    <location>
        <position position="55"/>
    </location>
</feature>
<gene>
    <name type="primary">CENPL</name>
</gene>
<organism>
    <name type="scientific">Bos taurus</name>
    <name type="common">Bovine</name>
    <dbReference type="NCBI Taxonomy" id="9913"/>
    <lineage>
        <taxon>Eukaryota</taxon>
        <taxon>Metazoa</taxon>
        <taxon>Chordata</taxon>
        <taxon>Craniata</taxon>
        <taxon>Vertebrata</taxon>
        <taxon>Euteleostomi</taxon>
        <taxon>Mammalia</taxon>
        <taxon>Eutheria</taxon>
        <taxon>Laurasiatheria</taxon>
        <taxon>Artiodactyla</taxon>
        <taxon>Ruminantia</taxon>
        <taxon>Pecora</taxon>
        <taxon>Bovidae</taxon>
        <taxon>Bovinae</taxon>
        <taxon>Bos</taxon>
    </lineage>
</organism>
<comment type="function">
    <text evidence="1">Component of the CENPA-CAD (nucleosome distal) complex, a complex recruited to centromeres which is involved in assembly of kinetochore proteins, mitotic progression and chromosome segregation. May be involved in incorporation of newly synthesized CENPA into centromeres via its interaction with the CENPA-NAC complex (By similarity).</text>
</comment>
<comment type="subunit">
    <text evidence="1">Component of the CENPA-CAD complex, composed of CENPI, CENPK, CENPL, CENPO, CENPP, CENPQ, CENPR and CENPS. The CENPA-CAD complex interacts with the CENPA-NAC complex, at least composed of CENPA, CENPC, CENPH, CENPM, CENPN, CENPT and CENPU (By similarity).</text>
</comment>
<comment type="subcellular location">
    <subcellularLocation>
        <location evidence="1">Nucleus</location>
    </subcellularLocation>
    <subcellularLocation>
        <location evidence="1">Chromosome</location>
        <location evidence="1">Centromere</location>
    </subcellularLocation>
    <text evidence="1">Localizes exclusively in the centromeres. The CENPA-CAD complex is probably recruited on centromeres by the CENPA-NAC complex (By similarity).</text>
</comment>
<comment type="similarity">
    <text evidence="3">Belongs to the CENP-L/IML3 family.</text>
</comment>
<accession>Q5EA18</accession>
<accession>A0JNC6</accession>
<sequence length="346" mass="39422">MDSYDAPELTPRQDASSRLKDFFVGATPLQKRLESVRKQTSFIPTPPRRKIPQGSQLQEDVDPQKFAFLLHKQWTLYSLTPLYKFSYTNFKEYSKLLNAFIAAEKQKGLAVEVGDDFNIKVVFSTLMGVKGTQRDPEAFLVQILSKSQLPSEHKEGKVLWTGWFCCVFGDSLLETVSEDFTCLPLFLVNGAETNTAIIGTWFQKTFDCYFRPLAINAFNLSWMAAMWTACKMDHYMATTEFLWSVPCSPHSLDISYAIHPEDAKALWDSVHKTPGEVTQEEVDLFMDCLYSHFHRHFKIHLSATRLVRVSTSVASAHTDGKIKILCPKYLIGVLAYLTELAVFQIE</sequence>
<reference key="1">
    <citation type="journal article" date="2005" name="BMC Genomics">
        <title>Characterization of 954 bovine full-CDS cDNA sequences.</title>
        <authorList>
            <person name="Harhay G.P."/>
            <person name="Sonstegard T.S."/>
            <person name="Keele J.W."/>
            <person name="Heaton M.P."/>
            <person name="Clawson M.L."/>
            <person name="Snelling W.M."/>
            <person name="Wiedmann R.T."/>
            <person name="Van Tassell C.P."/>
            <person name="Smith T.P.L."/>
        </authorList>
    </citation>
    <scope>NUCLEOTIDE SEQUENCE [LARGE SCALE MRNA]</scope>
</reference>
<reference key="2">
    <citation type="submission" date="2006-10" db="EMBL/GenBank/DDBJ databases">
        <authorList>
            <consortium name="NIH - Mammalian Gene Collection (MGC) project"/>
        </authorList>
    </citation>
    <scope>NUCLEOTIDE SEQUENCE [LARGE SCALE MRNA]</scope>
    <source>
        <strain>Hereford</strain>
        <tissue>Brain cortex</tissue>
    </source>
</reference>
<evidence type="ECO:0000250" key="1"/>
<evidence type="ECO:0000250" key="2">
    <source>
        <dbReference type="UniProtKB" id="Q8N0S6"/>
    </source>
</evidence>
<evidence type="ECO:0000305" key="3"/>
<keyword id="KW-0137">Centromere</keyword>
<keyword id="KW-0158">Chromosome</keyword>
<keyword id="KW-0539">Nucleus</keyword>
<keyword id="KW-0597">Phosphoprotein</keyword>
<keyword id="KW-1185">Reference proteome</keyword>
<name>CENPL_BOVIN</name>
<dbReference type="EMBL" id="BT020751">
    <property type="protein sequence ID" value="AAX08768.1"/>
    <property type="molecule type" value="mRNA"/>
</dbReference>
<dbReference type="EMBL" id="BC126617">
    <property type="protein sequence ID" value="AAI26618.1"/>
    <property type="molecule type" value="mRNA"/>
</dbReference>
<dbReference type="RefSeq" id="NP_001029954.1">
    <property type="nucleotide sequence ID" value="NM_001034782.1"/>
</dbReference>
<dbReference type="RefSeq" id="XP_010811661.1">
    <property type="nucleotide sequence ID" value="XM_010813359.4"/>
</dbReference>
<dbReference type="RefSeq" id="XP_059731513.1">
    <property type="nucleotide sequence ID" value="XM_059875530.1"/>
</dbReference>
<dbReference type="SMR" id="Q5EA18"/>
<dbReference type="FunCoup" id="Q5EA18">
    <property type="interactions" value="2350"/>
</dbReference>
<dbReference type="STRING" id="9913.ENSBTAP00000009094"/>
<dbReference type="PaxDb" id="9913-ENSBTAP00000009094"/>
<dbReference type="Ensembl" id="ENSBTAT00000009094.7">
    <property type="protein sequence ID" value="ENSBTAP00000009094.5"/>
    <property type="gene ID" value="ENSBTAG00000006925.7"/>
</dbReference>
<dbReference type="GeneID" id="615527"/>
<dbReference type="KEGG" id="bta:615527"/>
<dbReference type="CTD" id="91687"/>
<dbReference type="VEuPathDB" id="HostDB:ENSBTAG00000006925"/>
<dbReference type="VGNC" id="VGNC:27180">
    <property type="gene designation" value="CENPL"/>
</dbReference>
<dbReference type="eggNOG" id="ENOG502QS38">
    <property type="taxonomic scope" value="Eukaryota"/>
</dbReference>
<dbReference type="GeneTree" id="ENSGT00390000013877"/>
<dbReference type="HOGENOM" id="CLU_070598_0_0_1"/>
<dbReference type="InParanoid" id="Q5EA18"/>
<dbReference type="OMA" id="TACKMDQ"/>
<dbReference type="OrthoDB" id="8864979at2759"/>
<dbReference type="TreeFam" id="TF329688"/>
<dbReference type="Reactome" id="R-BTA-141444">
    <property type="pathway name" value="Amplification of signal from unattached kinetochores via a MAD2 inhibitory signal"/>
</dbReference>
<dbReference type="Reactome" id="R-BTA-2467813">
    <property type="pathway name" value="Separation of Sister Chromatids"/>
</dbReference>
<dbReference type="Reactome" id="R-BTA-2500257">
    <property type="pathway name" value="Resolution of Sister Chromatid Cohesion"/>
</dbReference>
<dbReference type="Reactome" id="R-BTA-5663220">
    <property type="pathway name" value="RHO GTPases Activate Formins"/>
</dbReference>
<dbReference type="Reactome" id="R-BTA-606279">
    <property type="pathway name" value="Deposition of new CENPA-containing nucleosomes at the centromere"/>
</dbReference>
<dbReference type="Reactome" id="R-BTA-68877">
    <property type="pathway name" value="Mitotic Prometaphase"/>
</dbReference>
<dbReference type="Reactome" id="R-BTA-9648025">
    <property type="pathway name" value="EML4 and NUDC in mitotic spindle formation"/>
</dbReference>
<dbReference type="Proteomes" id="UP000009136">
    <property type="component" value="Chromosome 16"/>
</dbReference>
<dbReference type="Bgee" id="ENSBTAG00000006925">
    <property type="expression patterns" value="Expressed in oocyte and 105 other cell types or tissues"/>
</dbReference>
<dbReference type="GO" id="GO:0000939">
    <property type="term" value="C:inner kinetochore"/>
    <property type="evidence" value="ECO:0007669"/>
    <property type="project" value="Ensembl"/>
</dbReference>
<dbReference type="GO" id="GO:0005634">
    <property type="term" value="C:nucleus"/>
    <property type="evidence" value="ECO:0007669"/>
    <property type="project" value="UniProtKB-SubCell"/>
</dbReference>
<dbReference type="InterPro" id="IPR025204">
    <property type="entry name" value="CENP-L"/>
</dbReference>
<dbReference type="PANTHER" id="PTHR31740">
    <property type="entry name" value="CENTROMERE PROTEIN L"/>
    <property type="match status" value="1"/>
</dbReference>
<dbReference type="PANTHER" id="PTHR31740:SF2">
    <property type="entry name" value="CENTROMERE PROTEIN L"/>
    <property type="match status" value="1"/>
</dbReference>
<dbReference type="Pfam" id="PF13092">
    <property type="entry name" value="CENP-L"/>
    <property type="match status" value="1"/>
</dbReference>
<protein>
    <recommendedName>
        <fullName>Centromere protein L</fullName>
        <shortName>CENP-L</shortName>
    </recommendedName>
</protein>